<accession>P0A4I2</accession>
<accession>Q03756</accession>
<protein>
    <recommendedName>
        <fullName>Transcriptional regulatory protein CutR</fullName>
    </recommendedName>
    <alternativeName>
        <fullName>Defective melC1 suppressor protein</fullName>
    </alternativeName>
</protein>
<gene>
    <name type="primary">cutR</name>
</gene>
<organism>
    <name type="scientific">Streptomyces lividans</name>
    <dbReference type="NCBI Taxonomy" id="1916"/>
    <lineage>
        <taxon>Bacteria</taxon>
        <taxon>Bacillati</taxon>
        <taxon>Actinomycetota</taxon>
        <taxon>Actinomycetes</taxon>
        <taxon>Kitasatosporales</taxon>
        <taxon>Streptomycetaceae</taxon>
        <taxon>Streptomyces</taxon>
    </lineage>
</organism>
<sequence length="217" mass="23915">MRVLVVEDEQLLADAVATGLRREAMAVDVVYDGAAALERIGVNDYDVVVLDRDLPLVHGDDVCRKIVELGMPTRVLMLTASGDVSDRVEGLEIGADDYLPKPFAFSELIARVRALGRRTSVPLPPVLERAGIKLDPNRREVFRDGKEVQLAPKEFAVLEVLMRSEGAVVSAEQLLEKAWDENTDPFTNVVRVTVMTLRRKLGEPPVIVTVPGSGYRI</sequence>
<dbReference type="EMBL" id="X58793">
    <property type="protein sequence ID" value="CAA41599.1"/>
    <property type="molecule type" value="Genomic_DNA"/>
</dbReference>
<dbReference type="PIR" id="S15274">
    <property type="entry name" value="S15274"/>
</dbReference>
<dbReference type="SMR" id="P0A4I2"/>
<dbReference type="GO" id="GO:0005829">
    <property type="term" value="C:cytosol"/>
    <property type="evidence" value="ECO:0007669"/>
    <property type="project" value="TreeGrafter"/>
</dbReference>
<dbReference type="GO" id="GO:0032993">
    <property type="term" value="C:protein-DNA complex"/>
    <property type="evidence" value="ECO:0007669"/>
    <property type="project" value="TreeGrafter"/>
</dbReference>
<dbReference type="GO" id="GO:0000156">
    <property type="term" value="F:phosphorelay response regulator activity"/>
    <property type="evidence" value="ECO:0007669"/>
    <property type="project" value="TreeGrafter"/>
</dbReference>
<dbReference type="GO" id="GO:0000976">
    <property type="term" value="F:transcription cis-regulatory region binding"/>
    <property type="evidence" value="ECO:0007669"/>
    <property type="project" value="TreeGrafter"/>
</dbReference>
<dbReference type="GO" id="GO:0006355">
    <property type="term" value="P:regulation of DNA-templated transcription"/>
    <property type="evidence" value="ECO:0007669"/>
    <property type="project" value="InterPro"/>
</dbReference>
<dbReference type="CDD" id="cd19935">
    <property type="entry name" value="REC_OmpR_CusR-like"/>
    <property type="match status" value="1"/>
</dbReference>
<dbReference type="CDD" id="cd00383">
    <property type="entry name" value="trans_reg_C"/>
    <property type="match status" value="1"/>
</dbReference>
<dbReference type="FunFam" id="1.10.10.10:FF:000179">
    <property type="entry name" value="DNA-binding response OmpR family regulator"/>
    <property type="match status" value="1"/>
</dbReference>
<dbReference type="FunFam" id="3.40.50.2300:FF:000026">
    <property type="entry name" value="DNA-binding response OmpR family regulator"/>
    <property type="match status" value="1"/>
</dbReference>
<dbReference type="Gene3D" id="3.40.50.2300">
    <property type="match status" value="1"/>
</dbReference>
<dbReference type="Gene3D" id="6.10.250.690">
    <property type="match status" value="1"/>
</dbReference>
<dbReference type="Gene3D" id="1.10.10.10">
    <property type="entry name" value="Winged helix-like DNA-binding domain superfamily/Winged helix DNA-binding domain"/>
    <property type="match status" value="1"/>
</dbReference>
<dbReference type="InterPro" id="IPR011006">
    <property type="entry name" value="CheY-like_superfamily"/>
</dbReference>
<dbReference type="InterPro" id="IPR001867">
    <property type="entry name" value="OmpR/PhoB-type_DNA-bd"/>
</dbReference>
<dbReference type="InterPro" id="IPR001789">
    <property type="entry name" value="Sig_transdc_resp-reg_receiver"/>
</dbReference>
<dbReference type="InterPro" id="IPR039420">
    <property type="entry name" value="WalR-like"/>
</dbReference>
<dbReference type="InterPro" id="IPR036388">
    <property type="entry name" value="WH-like_DNA-bd_sf"/>
</dbReference>
<dbReference type="PANTHER" id="PTHR48111">
    <property type="entry name" value="REGULATOR OF RPOS"/>
    <property type="match status" value="1"/>
</dbReference>
<dbReference type="PANTHER" id="PTHR48111:SF36">
    <property type="entry name" value="TRANSCRIPTIONAL REGULATORY PROTEIN CUTR"/>
    <property type="match status" value="1"/>
</dbReference>
<dbReference type="Pfam" id="PF00072">
    <property type="entry name" value="Response_reg"/>
    <property type="match status" value="1"/>
</dbReference>
<dbReference type="Pfam" id="PF00486">
    <property type="entry name" value="Trans_reg_C"/>
    <property type="match status" value="1"/>
</dbReference>
<dbReference type="SMART" id="SM00448">
    <property type="entry name" value="REC"/>
    <property type="match status" value="1"/>
</dbReference>
<dbReference type="SMART" id="SM00862">
    <property type="entry name" value="Trans_reg_C"/>
    <property type="match status" value="1"/>
</dbReference>
<dbReference type="SUPFAM" id="SSF52172">
    <property type="entry name" value="CheY-like"/>
    <property type="match status" value="1"/>
</dbReference>
<dbReference type="PROSITE" id="PS51755">
    <property type="entry name" value="OMPR_PHOB"/>
    <property type="match status" value="1"/>
</dbReference>
<dbReference type="PROSITE" id="PS50110">
    <property type="entry name" value="RESPONSE_REGULATORY"/>
    <property type="match status" value="1"/>
</dbReference>
<feature type="chain" id="PRO_0000081086" description="Transcriptional regulatory protein CutR">
    <location>
        <begin position="1"/>
        <end position="217"/>
    </location>
</feature>
<feature type="domain" description="Response regulatory" evidence="1">
    <location>
        <begin position="2"/>
        <end position="116"/>
    </location>
</feature>
<feature type="DNA-binding region" description="OmpR/PhoB-type" evidence="2">
    <location>
        <begin position="124"/>
        <end position="217"/>
    </location>
</feature>
<feature type="modified residue" description="4-aspartylphosphate" evidence="1">
    <location>
        <position position="51"/>
    </location>
</feature>
<comment type="function">
    <text>Member of the two-component regulatory system CutS/CutR, involved in the regulation of copper metabolism. CutR suppresses a defective melC1 gene, encoding a putative copper-transfer gene, probably by altering copper metabolism.</text>
</comment>
<name>CUTR_STRLI</name>
<evidence type="ECO:0000255" key="1">
    <source>
        <dbReference type="PROSITE-ProRule" id="PRU00169"/>
    </source>
</evidence>
<evidence type="ECO:0000255" key="2">
    <source>
        <dbReference type="PROSITE-ProRule" id="PRU01091"/>
    </source>
</evidence>
<keyword id="KW-0238">DNA-binding</keyword>
<keyword id="KW-0597">Phosphoprotein</keyword>
<keyword id="KW-0804">Transcription</keyword>
<keyword id="KW-0805">Transcription regulation</keyword>
<keyword id="KW-0902">Two-component regulatory system</keyword>
<reference key="1">
    <citation type="journal article" date="1991" name="Mol. Microbiol.">
        <title>A cloned ompR-like gene of Streptomyces lividans 66 suppresses defective melC1, a putative copper-transfer gene.</title>
        <authorList>
            <person name="Tseng H.-C."/>
            <person name="Chen C.W."/>
        </authorList>
    </citation>
    <scope>NUCLEOTIDE SEQUENCE [GENOMIC DNA]</scope>
    <source>
        <strain>66 / 1326</strain>
    </source>
</reference>
<proteinExistence type="inferred from homology"/>